<accession>Q9PI08</accession>
<accession>Q0PB12</accession>
<proteinExistence type="inferred from homology"/>
<evidence type="ECO:0000255" key="1">
    <source>
        <dbReference type="HAMAP-Rule" id="MF_00323"/>
    </source>
</evidence>
<evidence type="ECO:0000305" key="2"/>
<gene>
    <name evidence="1" type="primary">hemH</name>
    <name type="ordered locus">Cj0503c</name>
</gene>
<dbReference type="EC" id="4.98.1.1" evidence="1"/>
<dbReference type="EMBL" id="AL111168">
    <property type="protein sequence ID" value="CAL34650.1"/>
    <property type="molecule type" value="Genomic_DNA"/>
</dbReference>
<dbReference type="PIR" id="H81395">
    <property type="entry name" value="H81395"/>
</dbReference>
<dbReference type="RefSeq" id="WP_002858523.1">
    <property type="nucleotide sequence ID" value="NZ_SZUC01000002.1"/>
</dbReference>
<dbReference type="RefSeq" id="YP_002343935.1">
    <property type="nucleotide sequence ID" value="NC_002163.1"/>
</dbReference>
<dbReference type="SMR" id="Q9PI08"/>
<dbReference type="IntAct" id="Q9PI08">
    <property type="interactions" value="1"/>
</dbReference>
<dbReference type="STRING" id="192222.Cj0503c"/>
<dbReference type="PaxDb" id="192222-Cj0503c"/>
<dbReference type="EnsemblBacteria" id="CAL34650">
    <property type="protein sequence ID" value="CAL34650"/>
    <property type="gene ID" value="Cj0503c"/>
</dbReference>
<dbReference type="GeneID" id="904832"/>
<dbReference type="KEGG" id="cje:Cj0503c"/>
<dbReference type="PATRIC" id="fig|192222.6.peg.496"/>
<dbReference type="eggNOG" id="COG0276">
    <property type="taxonomic scope" value="Bacteria"/>
</dbReference>
<dbReference type="HOGENOM" id="CLU_018884_4_1_7"/>
<dbReference type="OrthoDB" id="9809741at2"/>
<dbReference type="UniPathway" id="UPA00252">
    <property type="reaction ID" value="UER00325"/>
</dbReference>
<dbReference type="Proteomes" id="UP000000799">
    <property type="component" value="Chromosome"/>
</dbReference>
<dbReference type="GO" id="GO:0005737">
    <property type="term" value="C:cytoplasm"/>
    <property type="evidence" value="ECO:0007669"/>
    <property type="project" value="UniProtKB-SubCell"/>
</dbReference>
<dbReference type="GO" id="GO:0004325">
    <property type="term" value="F:ferrochelatase activity"/>
    <property type="evidence" value="ECO:0007669"/>
    <property type="project" value="UniProtKB-UniRule"/>
</dbReference>
<dbReference type="GO" id="GO:0046872">
    <property type="term" value="F:metal ion binding"/>
    <property type="evidence" value="ECO:0007669"/>
    <property type="project" value="UniProtKB-KW"/>
</dbReference>
<dbReference type="GO" id="GO:0006783">
    <property type="term" value="P:heme biosynthetic process"/>
    <property type="evidence" value="ECO:0007669"/>
    <property type="project" value="UniProtKB-UniRule"/>
</dbReference>
<dbReference type="CDD" id="cd00419">
    <property type="entry name" value="Ferrochelatase_C"/>
    <property type="match status" value="1"/>
</dbReference>
<dbReference type="CDD" id="cd03411">
    <property type="entry name" value="Ferrochelatase_N"/>
    <property type="match status" value="1"/>
</dbReference>
<dbReference type="Gene3D" id="3.40.50.1400">
    <property type="match status" value="2"/>
</dbReference>
<dbReference type="HAMAP" id="MF_00323">
    <property type="entry name" value="Ferrochelatase"/>
    <property type="match status" value="1"/>
</dbReference>
<dbReference type="InterPro" id="IPR001015">
    <property type="entry name" value="Ferrochelatase"/>
</dbReference>
<dbReference type="InterPro" id="IPR019772">
    <property type="entry name" value="Ferrochelatase_AS"/>
</dbReference>
<dbReference type="InterPro" id="IPR033644">
    <property type="entry name" value="Ferrochelatase_C"/>
</dbReference>
<dbReference type="InterPro" id="IPR033659">
    <property type="entry name" value="Ferrochelatase_N"/>
</dbReference>
<dbReference type="NCBIfam" id="TIGR00109">
    <property type="entry name" value="hemH"/>
    <property type="match status" value="1"/>
</dbReference>
<dbReference type="PANTHER" id="PTHR11108">
    <property type="entry name" value="FERROCHELATASE"/>
    <property type="match status" value="1"/>
</dbReference>
<dbReference type="PANTHER" id="PTHR11108:SF1">
    <property type="entry name" value="FERROCHELATASE, MITOCHONDRIAL"/>
    <property type="match status" value="1"/>
</dbReference>
<dbReference type="Pfam" id="PF00762">
    <property type="entry name" value="Ferrochelatase"/>
    <property type="match status" value="1"/>
</dbReference>
<dbReference type="SUPFAM" id="SSF53800">
    <property type="entry name" value="Chelatase"/>
    <property type="match status" value="1"/>
</dbReference>
<dbReference type="PROSITE" id="PS00534">
    <property type="entry name" value="FERROCHELATASE"/>
    <property type="match status" value="1"/>
</dbReference>
<sequence>MKLVLFLNMGGATNLQDCEVFLKNMFNDPYILGIKNRFLRKFVAWIITKARVKAMQENYKKMGGKSPLNELTQSLCDKLNLKQDEFKFDFVNLYVPPFATEILQKYTLNASDEIILFPLYPHHSCTTVTSSLEVLQNEISKQKIQAKVKTIDIFYKNELYNEMIVSHILAKKSKFDAKILIFSAHSLPQSIIDKGDLYEKHVNDHVEILKEKLKDHFDEFILAYQSKLGPVKWLEPNTSDVLANLNDKALIYPISFCIDCSETIFELGMEYKHLSKYNYDLISCPNDSDEFMEFILKYLSDLN</sequence>
<comment type="function">
    <text evidence="1">Catalyzes the ferrous insertion into protoporphyrin IX.</text>
</comment>
<comment type="catalytic activity">
    <reaction evidence="1">
        <text>heme b + 2 H(+) = protoporphyrin IX + Fe(2+)</text>
        <dbReference type="Rhea" id="RHEA:22584"/>
        <dbReference type="ChEBI" id="CHEBI:15378"/>
        <dbReference type="ChEBI" id="CHEBI:29033"/>
        <dbReference type="ChEBI" id="CHEBI:57306"/>
        <dbReference type="ChEBI" id="CHEBI:60344"/>
        <dbReference type="EC" id="4.98.1.1"/>
    </reaction>
</comment>
<comment type="pathway">
    <text evidence="1">Porphyrin-containing compound metabolism; protoheme biosynthesis; protoheme from protoporphyrin-IX: step 1/1.</text>
</comment>
<comment type="subcellular location">
    <subcellularLocation>
        <location evidence="1">Cytoplasm</location>
    </subcellularLocation>
</comment>
<comment type="similarity">
    <text evidence="1 2">Belongs to the ferrochelatase family.</text>
</comment>
<protein>
    <recommendedName>
        <fullName evidence="1">Ferrochelatase</fullName>
        <ecNumber evidence="1">4.98.1.1</ecNumber>
    </recommendedName>
    <alternativeName>
        <fullName evidence="1">Heme synthase</fullName>
    </alternativeName>
    <alternativeName>
        <fullName evidence="1">Protoheme ferro-lyase</fullName>
    </alternativeName>
</protein>
<organism>
    <name type="scientific">Campylobacter jejuni subsp. jejuni serotype O:2 (strain ATCC 700819 / NCTC 11168)</name>
    <dbReference type="NCBI Taxonomy" id="192222"/>
    <lineage>
        <taxon>Bacteria</taxon>
        <taxon>Pseudomonadati</taxon>
        <taxon>Campylobacterota</taxon>
        <taxon>Epsilonproteobacteria</taxon>
        <taxon>Campylobacterales</taxon>
        <taxon>Campylobacteraceae</taxon>
        <taxon>Campylobacter</taxon>
    </lineage>
</organism>
<reference key="1">
    <citation type="journal article" date="2000" name="Nature">
        <title>The genome sequence of the food-borne pathogen Campylobacter jejuni reveals hypervariable sequences.</title>
        <authorList>
            <person name="Parkhill J."/>
            <person name="Wren B.W."/>
            <person name="Mungall K.L."/>
            <person name="Ketley J.M."/>
            <person name="Churcher C.M."/>
            <person name="Basham D."/>
            <person name="Chillingworth T."/>
            <person name="Davies R.M."/>
            <person name="Feltwell T."/>
            <person name="Holroyd S."/>
            <person name="Jagels K."/>
            <person name="Karlyshev A.V."/>
            <person name="Moule S."/>
            <person name="Pallen M.J."/>
            <person name="Penn C.W."/>
            <person name="Quail M.A."/>
            <person name="Rajandream M.A."/>
            <person name="Rutherford K.M."/>
            <person name="van Vliet A.H.M."/>
            <person name="Whitehead S."/>
            <person name="Barrell B.G."/>
        </authorList>
    </citation>
    <scope>NUCLEOTIDE SEQUENCE [LARGE SCALE GENOMIC DNA]</scope>
    <source>
        <strain>ATCC 700819 / NCTC 11168</strain>
    </source>
</reference>
<name>HEMH_CAMJE</name>
<keyword id="KW-0963">Cytoplasm</keyword>
<keyword id="KW-0350">Heme biosynthesis</keyword>
<keyword id="KW-0408">Iron</keyword>
<keyword id="KW-0456">Lyase</keyword>
<keyword id="KW-0479">Metal-binding</keyword>
<keyword id="KW-0627">Porphyrin biosynthesis</keyword>
<keyword id="KW-1185">Reference proteome</keyword>
<feature type="chain" id="PRO_0000175125" description="Ferrochelatase">
    <location>
        <begin position="1"/>
        <end position="303"/>
    </location>
</feature>
<feature type="binding site" evidence="1">
    <location>
        <position position="185"/>
    </location>
    <ligand>
        <name>Fe cation</name>
        <dbReference type="ChEBI" id="CHEBI:24875"/>
    </ligand>
</feature>
<feature type="binding site" evidence="1">
    <location>
        <position position="262"/>
    </location>
    <ligand>
        <name>Fe cation</name>
        <dbReference type="ChEBI" id="CHEBI:24875"/>
    </ligand>
</feature>